<gene>
    <name evidence="5" type="primary">POH1</name>
</gene>
<feature type="signal peptide" evidence="2">
    <location>
        <begin position="1"/>
        <end position="26"/>
    </location>
</feature>
<feature type="chain" id="PRO_5013983454" description="Class I hydrophobin POH1">
    <location>
        <begin position="27"/>
        <end position="113"/>
    </location>
</feature>
<feature type="disulfide bond" evidence="1">
    <location>
        <begin position="31"/>
        <end position="93"/>
    </location>
</feature>
<feature type="disulfide bond" evidence="1">
    <location>
        <begin position="38"/>
        <end position="87"/>
    </location>
</feature>
<feature type="disulfide bond" evidence="1">
    <location>
        <begin position="39"/>
        <end position="74"/>
    </location>
</feature>
<feature type="disulfide bond" evidence="1">
    <location>
        <begin position="94"/>
        <end position="107"/>
    </location>
</feature>
<comment type="function">
    <text evidence="3 4 6">Aerial growth, conidiation, and dispersal of filamentous fungi in the environment rely upon a capability of their secreting small amphipathic proteins called hydrophobins (HPBs) with low sequence identity. Class I can self-assemble into an outermost layer of rodlet bundles on aerial cell surfaces, conferring cellular hydrophobicity that supports fungal growth, development and dispersal; whereas Class II form highly ordered films at water-air interfaces through intermolecular interactions but contribute nothing to the rodlet structure (Probable). POH1 is a class I hydrophobin that is involved in the formation of mycelium knots and subsequent fruiting bodies (PubMed:33636611, PubMed:9846731).</text>
</comment>
<comment type="subunit">
    <text evidence="1">Self-assembles to form functional amyloid fibrils called rodlets. Self-assembly into fibrillar rodlets occurs spontaneously at hydrophobic:hydrophilic interfaces and the rodlets further associate laterally to form amphipathic monolayers.</text>
</comment>
<comment type="subcellular location">
    <subcellularLocation>
        <location evidence="7">Secreted</location>
    </subcellularLocation>
    <subcellularLocation>
        <location evidence="7">Secreted</location>
        <location evidence="7">Cell wall</location>
    </subcellularLocation>
</comment>
<comment type="tissue specificity">
    <text evidence="3 4">Expressed in the fruiting bodies but not in vegetative mycelium.</text>
</comment>
<comment type="induction">
    <text evidence="3">Expression is induced by natural light and low temperature.</text>
</comment>
<comment type="similarity">
    <text evidence="6">Belongs to the fungal hydrophobin family.</text>
</comment>
<accession>O13502</accession>
<name>POH1_PLEOS</name>
<reference key="1">
    <citation type="journal article" date="1998" name="Microbiology">
        <title>Identification of three differentially expressed hydrophobins in Pleurotus ostreatus (oyster mushroom).</title>
        <authorList>
            <person name="Asgeirsddttir S.A."/>
            <person name="de Vries O.M.H."/>
            <person name="Wessels J.G.H."/>
        </authorList>
    </citation>
    <scope>NUCLEOTIDE SEQUENCE [GENOMIC DNA]</scope>
    <scope>TISSUE SPECIFICITY</scope>
    <scope>FUNCTION</scope>
</reference>
<reference key="2">
    <citation type="journal article" date="2021" name="Microbiol. Res.">
        <title>Identification of hydrophobin genes and their physiological functions related to growth and development in Pleurotus ostreatus.</title>
        <authorList>
            <person name="Xu D."/>
            <person name="Wang Y."/>
            <person name="Keerio A.A."/>
            <person name="Ma A."/>
        </authorList>
    </citation>
    <scope>FUNCTION</scope>
    <scope>TISSUE SPECIFICITY</scope>
    <scope>INDUCTION</scope>
</reference>
<protein>
    <recommendedName>
        <fullName evidence="5">Class I hydrophobin POH1</fullName>
    </recommendedName>
</protein>
<proteinExistence type="evidence at transcript level"/>
<dbReference type="EMBL" id="AJ225060">
    <property type="protein sequence ID" value="CAA12391.1"/>
    <property type="molecule type" value="Genomic_DNA"/>
</dbReference>
<dbReference type="EMBL" id="Y14656">
    <property type="protein sequence ID" value="CAA74986.1"/>
    <property type="molecule type" value="mRNA"/>
</dbReference>
<dbReference type="SMR" id="O13502"/>
<dbReference type="GO" id="GO:0005576">
    <property type="term" value="C:extracellular region"/>
    <property type="evidence" value="ECO:0007669"/>
    <property type="project" value="UniProtKB-KW"/>
</dbReference>
<dbReference type="GO" id="GO:0009277">
    <property type="term" value="C:fungal-type cell wall"/>
    <property type="evidence" value="ECO:0007669"/>
    <property type="project" value="InterPro"/>
</dbReference>
<dbReference type="GO" id="GO:0005199">
    <property type="term" value="F:structural constituent of cell wall"/>
    <property type="evidence" value="ECO:0007669"/>
    <property type="project" value="InterPro"/>
</dbReference>
<dbReference type="CDD" id="cd23507">
    <property type="entry name" value="hydrophobin_I"/>
    <property type="match status" value="1"/>
</dbReference>
<dbReference type="InterPro" id="IPR001338">
    <property type="entry name" value="Hydrophobin"/>
</dbReference>
<dbReference type="Pfam" id="PF01185">
    <property type="entry name" value="Hydrophobin"/>
    <property type="match status" value="1"/>
</dbReference>
<dbReference type="SMART" id="SM00075">
    <property type="entry name" value="HYDRO"/>
    <property type="match status" value="1"/>
</dbReference>
<organism>
    <name type="scientific">Pleurotus ostreatus</name>
    <name type="common">Oyster mushroom</name>
    <name type="synonym">White-rot fungus</name>
    <dbReference type="NCBI Taxonomy" id="5322"/>
    <lineage>
        <taxon>Eukaryota</taxon>
        <taxon>Fungi</taxon>
        <taxon>Dikarya</taxon>
        <taxon>Basidiomycota</taxon>
        <taxon>Agaricomycotina</taxon>
        <taxon>Agaricomycetes</taxon>
        <taxon>Agaricomycetidae</taxon>
        <taxon>Agaricales</taxon>
        <taxon>Pleurotineae</taxon>
        <taxon>Pleurotaceae</taxon>
        <taxon>Pleurotus</taxon>
    </lineage>
</organism>
<evidence type="ECO:0000250" key="1">
    <source>
        <dbReference type="UniProtKB" id="Q04571"/>
    </source>
</evidence>
<evidence type="ECO:0000255" key="2"/>
<evidence type="ECO:0000269" key="3">
    <source>
    </source>
</evidence>
<evidence type="ECO:0000269" key="4">
    <source>
    </source>
</evidence>
<evidence type="ECO:0000303" key="5">
    <source>
    </source>
</evidence>
<evidence type="ECO:0000305" key="6"/>
<evidence type="ECO:0000305" key="7">
    <source>
    </source>
</evidence>
<sequence>MFSIRISTVVLAASALLAVAIPMTNTETPQCNTGPIQCCNSVQSATSSAAAGPLAALGVLSGIASLLGEVGLDCSPLQVIGVGANSCSSQAACCTGNTFNGAVVLGCSPIKLL</sequence>
<keyword id="KW-0134">Cell wall</keyword>
<keyword id="KW-1015">Disulfide bond</keyword>
<keyword id="KW-0964">Secreted</keyword>
<keyword id="KW-0732">Signal</keyword>